<accession>B2SXH3</accession>
<organism>
    <name type="scientific">Paraburkholderia phytofirmans (strain DSM 17436 / LMG 22146 / PsJN)</name>
    <name type="common">Burkholderia phytofirmans</name>
    <dbReference type="NCBI Taxonomy" id="398527"/>
    <lineage>
        <taxon>Bacteria</taxon>
        <taxon>Pseudomonadati</taxon>
        <taxon>Pseudomonadota</taxon>
        <taxon>Betaproteobacteria</taxon>
        <taxon>Burkholderiales</taxon>
        <taxon>Burkholderiaceae</taxon>
        <taxon>Paraburkholderia</taxon>
    </lineage>
</organism>
<reference key="1">
    <citation type="journal article" date="2011" name="J. Bacteriol.">
        <title>Complete genome sequence of the plant growth-promoting endophyte Burkholderia phytofirmans strain PsJN.</title>
        <authorList>
            <person name="Weilharter A."/>
            <person name="Mitter B."/>
            <person name="Shin M.V."/>
            <person name="Chain P.S."/>
            <person name="Nowak J."/>
            <person name="Sessitsch A."/>
        </authorList>
    </citation>
    <scope>NUCLEOTIDE SEQUENCE [LARGE SCALE GENOMIC DNA]</scope>
    <source>
        <strain>DSM 17436 / LMG 22146 / PsJN</strain>
    </source>
</reference>
<feature type="chain" id="PRO_1000139893" description="HPr kinase/phosphorylase">
    <location>
        <begin position="1"/>
        <end position="322"/>
    </location>
</feature>
<feature type="region of interest" description="Important for the catalytic mechanism of both phosphorylation and dephosphorylation" evidence="1">
    <location>
        <begin position="209"/>
        <end position="218"/>
    </location>
</feature>
<feature type="region of interest" description="Important for the catalytic mechanism of dephosphorylation" evidence="1">
    <location>
        <begin position="271"/>
        <end position="276"/>
    </location>
</feature>
<feature type="active site" evidence="1">
    <location>
        <position position="146"/>
    </location>
</feature>
<feature type="active site" evidence="1">
    <location>
        <position position="167"/>
    </location>
</feature>
<feature type="active site" description="Proton acceptor; for phosphorylation activity. Proton donor; for dephosphorylation activity" evidence="1">
    <location>
        <position position="185"/>
    </location>
</feature>
<feature type="active site" evidence="1">
    <location>
        <position position="250"/>
    </location>
</feature>
<feature type="binding site" evidence="1">
    <location>
        <begin position="161"/>
        <end position="168"/>
    </location>
    <ligand>
        <name>ATP</name>
        <dbReference type="ChEBI" id="CHEBI:30616"/>
    </ligand>
</feature>
<feature type="binding site" evidence="1">
    <location>
        <position position="168"/>
    </location>
    <ligand>
        <name>Mg(2+)</name>
        <dbReference type="ChEBI" id="CHEBI:18420"/>
    </ligand>
</feature>
<feature type="binding site" evidence="1">
    <location>
        <position position="210"/>
    </location>
    <ligand>
        <name>Mg(2+)</name>
        <dbReference type="ChEBI" id="CHEBI:18420"/>
    </ligand>
</feature>
<protein>
    <recommendedName>
        <fullName evidence="1">HPr kinase/phosphorylase</fullName>
        <shortName evidence="1">HPrK/P</shortName>
        <ecNumber evidence="1">2.7.11.-</ecNumber>
        <ecNumber evidence="1">2.7.4.-</ecNumber>
    </recommendedName>
    <alternativeName>
        <fullName evidence="1">HPr(Ser) kinase/phosphorylase</fullName>
    </alternativeName>
</protein>
<keyword id="KW-0067">ATP-binding</keyword>
<keyword id="KW-0418">Kinase</keyword>
<keyword id="KW-0460">Magnesium</keyword>
<keyword id="KW-0479">Metal-binding</keyword>
<keyword id="KW-0511">Multifunctional enzyme</keyword>
<keyword id="KW-0547">Nucleotide-binding</keyword>
<keyword id="KW-0723">Serine/threonine-protein kinase</keyword>
<keyword id="KW-0808">Transferase</keyword>
<comment type="function">
    <text evidence="1">Catalyzes the ATP- as well as the pyrophosphate-dependent phosphorylation of a specific serine residue in HPr, a phosphocarrier protein of the phosphoenolpyruvate-dependent sugar phosphotransferase system (PTS). HprK/P also catalyzes the pyrophosphate-producing, inorganic phosphate-dependent dephosphorylation (phosphorolysis) of seryl-phosphorylated HPr (P-Ser-HPr).</text>
</comment>
<comment type="catalytic activity">
    <reaction evidence="1">
        <text>[HPr protein]-L-serine + ATP = [HPr protein]-O-phospho-L-serine + ADP + H(+)</text>
        <dbReference type="Rhea" id="RHEA:46600"/>
        <dbReference type="Rhea" id="RHEA-COMP:11602"/>
        <dbReference type="Rhea" id="RHEA-COMP:11603"/>
        <dbReference type="ChEBI" id="CHEBI:15378"/>
        <dbReference type="ChEBI" id="CHEBI:29999"/>
        <dbReference type="ChEBI" id="CHEBI:30616"/>
        <dbReference type="ChEBI" id="CHEBI:83421"/>
        <dbReference type="ChEBI" id="CHEBI:456216"/>
    </reaction>
</comment>
<comment type="catalytic activity">
    <reaction evidence="1">
        <text>[HPr protein]-O-phospho-L-serine + phosphate + H(+) = [HPr protein]-L-serine + diphosphate</text>
        <dbReference type="Rhea" id="RHEA:46604"/>
        <dbReference type="Rhea" id="RHEA-COMP:11602"/>
        <dbReference type="Rhea" id="RHEA-COMP:11603"/>
        <dbReference type="ChEBI" id="CHEBI:15378"/>
        <dbReference type="ChEBI" id="CHEBI:29999"/>
        <dbReference type="ChEBI" id="CHEBI:33019"/>
        <dbReference type="ChEBI" id="CHEBI:43474"/>
        <dbReference type="ChEBI" id="CHEBI:83421"/>
    </reaction>
</comment>
<comment type="cofactor">
    <cofactor evidence="1">
        <name>Mg(2+)</name>
        <dbReference type="ChEBI" id="CHEBI:18420"/>
    </cofactor>
</comment>
<comment type="subunit">
    <text evidence="1">Homohexamer.</text>
</comment>
<comment type="domain">
    <text evidence="1">The Walker A ATP-binding motif also binds Pi and PPi.</text>
</comment>
<comment type="miscellaneous">
    <text evidence="1">Both phosphorylation and phosphorolysis are carried out by the same active site and suggest a common mechanism for both reactions.</text>
</comment>
<comment type="similarity">
    <text evidence="1">Belongs to the HPrK/P family.</text>
</comment>
<sequence length="322" mass="35209">MDTSSINAQSIFDDNAAMLKLSWLTGHEGWERGFSSESVANATSSADLVGHLNLIHPNRIQVLGDAEIDYYKRQTDEDRSRHMAELIALEPPFLVVAGGVAAPPELVLRCTRSSTPLFTTPMSAAAVIDSLRLYMSRILAPRATLHGVFLDILGMGVLLTGDSGLGKSELGLELISRGHGLVADDAVDFVRLGPDFVEGRCPPLLQNLLEVRGLGLLDIKTIFGETAVRRKMKLKLIVQLVRRPDGEFQRLPLESQTVDVLGLPISKVTIQVAAGRNLAVLVEAAVRNTILQLRGIDTLRDFMDRQRLAMQDPDSQFPGKLI</sequence>
<gene>
    <name evidence="1" type="primary">hprK</name>
    <name type="ordered locus">Bphyt_0593</name>
</gene>
<proteinExistence type="inferred from homology"/>
<name>HPRK_PARPJ</name>
<evidence type="ECO:0000255" key="1">
    <source>
        <dbReference type="HAMAP-Rule" id="MF_01249"/>
    </source>
</evidence>
<dbReference type="EC" id="2.7.11.-" evidence="1"/>
<dbReference type="EC" id="2.7.4.-" evidence="1"/>
<dbReference type="EMBL" id="CP001052">
    <property type="protein sequence ID" value="ACD15018.1"/>
    <property type="molecule type" value="Genomic_DNA"/>
</dbReference>
<dbReference type="RefSeq" id="WP_012431656.1">
    <property type="nucleotide sequence ID" value="NC_010681.1"/>
</dbReference>
<dbReference type="SMR" id="B2SXH3"/>
<dbReference type="STRING" id="398527.Bphyt_0593"/>
<dbReference type="GeneID" id="97305838"/>
<dbReference type="KEGG" id="bpy:Bphyt_0593"/>
<dbReference type="eggNOG" id="COG1493">
    <property type="taxonomic scope" value="Bacteria"/>
</dbReference>
<dbReference type="HOGENOM" id="CLU_052030_0_2_4"/>
<dbReference type="OrthoDB" id="9778803at2"/>
<dbReference type="Proteomes" id="UP000001739">
    <property type="component" value="Chromosome 1"/>
</dbReference>
<dbReference type="GO" id="GO:0005524">
    <property type="term" value="F:ATP binding"/>
    <property type="evidence" value="ECO:0007669"/>
    <property type="project" value="UniProtKB-UniRule"/>
</dbReference>
<dbReference type="GO" id="GO:0000287">
    <property type="term" value="F:magnesium ion binding"/>
    <property type="evidence" value="ECO:0007669"/>
    <property type="project" value="UniProtKB-UniRule"/>
</dbReference>
<dbReference type="GO" id="GO:0000155">
    <property type="term" value="F:phosphorelay sensor kinase activity"/>
    <property type="evidence" value="ECO:0007669"/>
    <property type="project" value="InterPro"/>
</dbReference>
<dbReference type="GO" id="GO:0004674">
    <property type="term" value="F:protein serine/threonine kinase activity"/>
    <property type="evidence" value="ECO:0007669"/>
    <property type="project" value="UniProtKB-KW"/>
</dbReference>
<dbReference type="GO" id="GO:0004712">
    <property type="term" value="F:protein serine/threonine/tyrosine kinase activity"/>
    <property type="evidence" value="ECO:0007669"/>
    <property type="project" value="UniProtKB-UniRule"/>
</dbReference>
<dbReference type="GO" id="GO:0006109">
    <property type="term" value="P:regulation of carbohydrate metabolic process"/>
    <property type="evidence" value="ECO:0007669"/>
    <property type="project" value="UniProtKB-UniRule"/>
</dbReference>
<dbReference type="CDD" id="cd01918">
    <property type="entry name" value="HprK_C"/>
    <property type="match status" value="1"/>
</dbReference>
<dbReference type="FunFam" id="3.40.50.300:FF:000174">
    <property type="entry name" value="HPr kinase/phosphorylase"/>
    <property type="match status" value="1"/>
</dbReference>
<dbReference type="Gene3D" id="3.40.1390.20">
    <property type="entry name" value="HprK N-terminal domain-like"/>
    <property type="match status" value="1"/>
</dbReference>
<dbReference type="Gene3D" id="3.40.50.300">
    <property type="entry name" value="P-loop containing nucleotide triphosphate hydrolases"/>
    <property type="match status" value="1"/>
</dbReference>
<dbReference type="HAMAP" id="MF_01249">
    <property type="entry name" value="HPr_kinase"/>
    <property type="match status" value="1"/>
</dbReference>
<dbReference type="InterPro" id="IPR003755">
    <property type="entry name" value="HPr(Ser)_kin/Pase"/>
</dbReference>
<dbReference type="InterPro" id="IPR011104">
    <property type="entry name" value="Hpr_kin/Pase_C"/>
</dbReference>
<dbReference type="InterPro" id="IPR011126">
    <property type="entry name" value="Hpr_kin/Pase_Hpr_N"/>
</dbReference>
<dbReference type="InterPro" id="IPR027417">
    <property type="entry name" value="P-loop_NTPase"/>
</dbReference>
<dbReference type="InterPro" id="IPR028979">
    <property type="entry name" value="Ser_kin/Pase_Hpr-like_N_sf"/>
</dbReference>
<dbReference type="NCBIfam" id="TIGR00679">
    <property type="entry name" value="hpr-ser"/>
    <property type="match status" value="1"/>
</dbReference>
<dbReference type="PANTHER" id="PTHR30305:SF1">
    <property type="entry name" value="HPR KINASE_PHOSPHORYLASE"/>
    <property type="match status" value="1"/>
</dbReference>
<dbReference type="PANTHER" id="PTHR30305">
    <property type="entry name" value="PROTEIN YJDM-RELATED"/>
    <property type="match status" value="1"/>
</dbReference>
<dbReference type="Pfam" id="PF07475">
    <property type="entry name" value="Hpr_kinase_C"/>
    <property type="match status" value="1"/>
</dbReference>
<dbReference type="Pfam" id="PF02603">
    <property type="entry name" value="Hpr_kinase_N"/>
    <property type="match status" value="1"/>
</dbReference>
<dbReference type="SUPFAM" id="SSF75138">
    <property type="entry name" value="HprK N-terminal domain-like"/>
    <property type="match status" value="1"/>
</dbReference>
<dbReference type="SUPFAM" id="SSF53795">
    <property type="entry name" value="PEP carboxykinase-like"/>
    <property type="match status" value="1"/>
</dbReference>